<comment type="function">
    <text evidence="1">Retroviral replication requires the nuclear export and translation of unspliced, singly-spliced and multiply-spliced derivatives of the initial genomic transcript. Rec interacts with a highly structured RNA element (RcRE) present in the viral 3'LTR and recruits the cellular nuclear export machinery. This permits export to the cytoplasm of unspliced genomic or incompletely spliced subgenomic viral transcripts (By similarity).</text>
</comment>
<comment type="subunit">
    <text evidence="1">Forms homodimers, homotrimers, and homotetramers via a C-terminal domain. Associates with XPO1 and with ZNF145 (By similarity).</text>
</comment>
<comment type="subcellular location">
    <subcellularLocation>
        <location evidence="1">Cytoplasm</location>
    </subcellularLocation>
    <subcellularLocation>
        <location evidence="1">Nucleus</location>
        <location evidence="1">Nucleolus</location>
    </subcellularLocation>
    <text evidence="1">Shuttles between the nucleus and the cytoplasm. When in the nucleus, resides in the nucleolus (By similarity).</text>
</comment>
<comment type="miscellaneous">
    <text>Despite functional similarity, Rec shares almost no sequence homology with HIV-1 Rev and HTLV-1 Rex.</text>
</comment>
<comment type="miscellaneous">
    <text>Has a type 2 genome. The HERV-K(HML-2) family contains type 1 and type 2 genomes depending on the absence or presence of 292 nucleotides at the 5'-end of the env gene. Rec proteins are translated from a doubly spliced transcript expressed exclusively by HERV-K(HML-2) type 2 proviral genomes. The first exon comprises the 87 N-terminal amino acids of the HERV-K(HMLM-2) type 2 envelope protein. The second exon (18 amino acids) is positioned in the 3' part of the proviral genome.</text>
</comment>
<proteinExistence type="evidence at protein level"/>
<name>REC16_HUMAN</name>
<accession>P61578</accession>
<dbReference type="EMBL" id="AL392086">
    <property type="status" value="NOT_ANNOTATED_CDS"/>
    <property type="molecule type" value="Genomic_DNA"/>
</dbReference>
<dbReference type="SMR" id="P61578"/>
<dbReference type="BioMuta" id="HGNC:39023"/>
<dbReference type="MassIVE" id="P61578"/>
<dbReference type="GeneCards" id="ERVK-16"/>
<dbReference type="HGNC" id="HGNC:39023">
    <property type="gene designation" value="ERVK-16"/>
</dbReference>
<dbReference type="neXtProt" id="NX_P61578"/>
<dbReference type="InParanoid" id="P61578"/>
<dbReference type="PAN-GO" id="P61578">
    <property type="GO annotations" value="0 GO annotations based on evolutionary models"/>
</dbReference>
<dbReference type="PhylomeDB" id="P61578"/>
<dbReference type="Pharos" id="P61578">
    <property type="development level" value="Tdark"/>
</dbReference>
<dbReference type="PRO" id="PR:P61578"/>
<dbReference type="Proteomes" id="UP000005640">
    <property type="component" value="Unplaced"/>
</dbReference>
<dbReference type="RNAct" id="P61578">
    <property type="molecule type" value="protein"/>
</dbReference>
<dbReference type="GO" id="GO:0005737">
    <property type="term" value="C:cytoplasm"/>
    <property type="evidence" value="ECO:0007669"/>
    <property type="project" value="UniProtKB-SubCell"/>
</dbReference>
<dbReference type="GO" id="GO:0005730">
    <property type="term" value="C:nucleolus"/>
    <property type="evidence" value="ECO:0007669"/>
    <property type="project" value="UniProtKB-SubCell"/>
</dbReference>
<dbReference type="GO" id="GO:0003723">
    <property type="term" value="F:RNA binding"/>
    <property type="evidence" value="ECO:0007669"/>
    <property type="project" value="UniProtKB-KW"/>
</dbReference>
<dbReference type="GO" id="GO:0051028">
    <property type="term" value="P:mRNA transport"/>
    <property type="evidence" value="ECO:0007669"/>
    <property type="project" value="UniProtKB-KW"/>
</dbReference>
<dbReference type="Pfam" id="PF15695">
    <property type="entry name" value="HERV-K_REC"/>
    <property type="match status" value="1"/>
</dbReference>
<organism>
    <name type="scientific">Homo sapiens</name>
    <name type="common">Human</name>
    <dbReference type="NCBI Taxonomy" id="9606"/>
    <lineage>
        <taxon>Eukaryota</taxon>
        <taxon>Metazoa</taxon>
        <taxon>Chordata</taxon>
        <taxon>Craniata</taxon>
        <taxon>Vertebrata</taxon>
        <taxon>Euteleostomi</taxon>
        <taxon>Mammalia</taxon>
        <taxon>Eutheria</taxon>
        <taxon>Euarchontoglires</taxon>
        <taxon>Primates</taxon>
        <taxon>Haplorrhini</taxon>
        <taxon>Catarrhini</taxon>
        <taxon>Hominidae</taxon>
        <taxon>Homo</taxon>
    </lineage>
</organism>
<keyword id="KW-0963">Cytoplasm</keyword>
<keyword id="KW-0895">ERV</keyword>
<keyword id="KW-0509">mRNA transport</keyword>
<keyword id="KW-0539">Nucleus</keyword>
<keyword id="KW-1185">Reference proteome</keyword>
<keyword id="KW-0694">RNA-binding</keyword>
<keyword id="KW-0813">Transport</keyword>
<keyword id="KW-0814">Transposable element</keyword>
<feature type="chain" id="PRO_0000186782" description="Endogenous retrovirus group K member 16 Rec protein">
    <location>
        <begin position="1"/>
        <end position="105"/>
    </location>
</feature>
<feature type="region of interest" description="Disordered" evidence="3">
    <location>
        <begin position="1"/>
        <end position="41"/>
    </location>
</feature>
<feature type="short sequence motif" description="Nuclear localization signal" evidence="2">
    <location>
        <begin position="13"/>
        <end position="20"/>
    </location>
</feature>
<feature type="short sequence motif" description="Nuclear export signal" evidence="2">
    <location>
        <begin position="50"/>
        <end position="59"/>
    </location>
</feature>
<feature type="compositionally biased region" description="Basic residues" evidence="3">
    <location>
        <begin position="10"/>
        <end position="20"/>
    </location>
</feature>
<evidence type="ECO:0000250" key="1"/>
<evidence type="ECO:0000255" key="2"/>
<evidence type="ECO:0000256" key="3">
    <source>
        <dbReference type="SAM" id="MobiDB-lite"/>
    </source>
</evidence>
<gene>
    <name type="primary">ERVK-16</name>
</gene>
<protein>
    <recommendedName>
        <fullName>Endogenous retrovirus group K member 16 Rec protein</fullName>
    </recommendedName>
    <alternativeName>
        <fullName>HERV-K_10p14 provirus Rec protein</fullName>
    </alternativeName>
</protein>
<sequence>MNPSEMQRKAPPRRRRHRNRAPSSHKMNKMMMSEEQMKLPSTNKAEPLTWAQLNKLTQLATKCLENTKMTQTPESMLLAALMIVSTVSAGVPNSSEETVTIENGP</sequence>
<reference key="1">
    <citation type="journal article" date="2004" name="Nature">
        <title>The DNA sequence and comparative analysis of human chromosome 10.</title>
        <authorList>
            <person name="Deloukas P."/>
            <person name="Earthrowl M.E."/>
            <person name="Grafham D.V."/>
            <person name="Rubenfield M."/>
            <person name="French L."/>
            <person name="Steward C.A."/>
            <person name="Sims S.K."/>
            <person name="Jones M.C."/>
            <person name="Searle S."/>
            <person name="Scott C."/>
            <person name="Howe K."/>
            <person name="Hunt S.E."/>
            <person name="Andrews T.D."/>
            <person name="Gilbert J.G.R."/>
            <person name="Swarbreck D."/>
            <person name="Ashurst J.L."/>
            <person name="Taylor A."/>
            <person name="Battles J."/>
            <person name="Bird C.P."/>
            <person name="Ainscough R."/>
            <person name="Almeida J.P."/>
            <person name="Ashwell R.I.S."/>
            <person name="Ambrose K.D."/>
            <person name="Babbage A.K."/>
            <person name="Bagguley C.L."/>
            <person name="Bailey J."/>
            <person name="Banerjee R."/>
            <person name="Bates K."/>
            <person name="Beasley H."/>
            <person name="Bray-Allen S."/>
            <person name="Brown A.J."/>
            <person name="Brown J.Y."/>
            <person name="Burford D.C."/>
            <person name="Burrill W."/>
            <person name="Burton J."/>
            <person name="Cahill P."/>
            <person name="Camire D."/>
            <person name="Carter N.P."/>
            <person name="Chapman J.C."/>
            <person name="Clark S.Y."/>
            <person name="Clarke G."/>
            <person name="Clee C.M."/>
            <person name="Clegg S."/>
            <person name="Corby N."/>
            <person name="Coulson A."/>
            <person name="Dhami P."/>
            <person name="Dutta I."/>
            <person name="Dunn M."/>
            <person name="Faulkner L."/>
            <person name="Frankish A."/>
            <person name="Frankland J.A."/>
            <person name="Garner P."/>
            <person name="Garnett J."/>
            <person name="Gribble S."/>
            <person name="Griffiths C."/>
            <person name="Grocock R."/>
            <person name="Gustafson E."/>
            <person name="Hammond S."/>
            <person name="Harley J.L."/>
            <person name="Hart E."/>
            <person name="Heath P.D."/>
            <person name="Ho T.P."/>
            <person name="Hopkins B."/>
            <person name="Horne J."/>
            <person name="Howden P.J."/>
            <person name="Huckle E."/>
            <person name="Hynds C."/>
            <person name="Johnson C."/>
            <person name="Johnson D."/>
            <person name="Kana A."/>
            <person name="Kay M."/>
            <person name="Kimberley A.M."/>
            <person name="Kershaw J.K."/>
            <person name="Kokkinaki M."/>
            <person name="Laird G.K."/>
            <person name="Lawlor S."/>
            <person name="Lee H.M."/>
            <person name="Leongamornlert D.A."/>
            <person name="Laird G."/>
            <person name="Lloyd C."/>
            <person name="Lloyd D.M."/>
            <person name="Loveland J."/>
            <person name="Lovell J."/>
            <person name="McLaren S."/>
            <person name="McLay K.E."/>
            <person name="McMurray A."/>
            <person name="Mashreghi-Mohammadi M."/>
            <person name="Matthews L."/>
            <person name="Milne S."/>
            <person name="Nickerson T."/>
            <person name="Nguyen M."/>
            <person name="Overton-Larty E."/>
            <person name="Palmer S.A."/>
            <person name="Pearce A.V."/>
            <person name="Peck A.I."/>
            <person name="Pelan S."/>
            <person name="Phillimore B."/>
            <person name="Porter K."/>
            <person name="Rice C.M."/>
            <person name="Rogosin A."/>
            <person name="Ross M.T."/>
            <person name="Sarafidou T."/>
            <person name="Sehra H.K."/>
            <person name="Shownkeen R."/>
            <person name="Skuce C.D."/>
            <person name="Smith M."/>
            <person name="Standring L."/>
            <person name="Sycamore N."/>
            <person name="Tester J."/>
            <person name="Thorpe A."/>
            <person name="Torcasso W."/>
            <person name="Tracey A."/>
            <person name="Tromans A."/>
            <person name="Tsolas J."/>
            <person name="Wall M."/>
            <person name="Walsh J."/>
            <person name="Wang H."/>
            <person name="Weinstock K."/>
            <person name="West A.P."/>
            <person name="Willey D.L."/>
            <person name="Whitehead S.L."/>
            <person name="Wilming L."/>
            <person name="Wray P.W."/>
            <person name="Young L."/>
            <person name="Chen Y."/>
            <person name="Lovering R.C."/>
            <person name="Moschonas N.K."/>
            <person name="Siebert R."/>
            <person name="Fechtel K."/>
            <person name="Bentley D."/>
            <person name="Durbin R.M."/>
            <person name="Hubbard T."/>
            <person name="Doucette-Stamm L."/>
            <person name="Beck S."/>
            <person name="Smith D.R."/>
            <person name="Rogers J."/>
        </authorList>
    </citation>
    <scope>NUCLEOTIDE SEQUENCE [LARGE SCALE GENOMIC DNA]</scope>
</reference>
<reference key="2">
    <citation type="journal article" date="2004" name="Virology">
        <title>Human endogenous retrovirus HERV-K(HML-2) proviruses with Rec protein coding capacity and transcriptional activity.</title>
        <authorList>
            <person name="Mayer J."/>
            <person name="Ehlhardt S."/>
            <person name="Seifert M."/>
            <person name="Sauter M."/>
            <person name="Mueller-Lantzsch N."/>
            <person name="Mehraein Y."/>
            <person name="Zang K.-D."/>
            <person name="Meese E.U."/>
        </authorList>
    </citation>
    <scope>CHARACTERIZATION</scope>
</reference>